<proteinExistence type="evidence at protein level"/>
<evidence type="ECO:0000255" key="1">
    <source>
        <dbReference type="HAMAP-Rule" id="MF_03001"/>
    </source>
</evidence>
<evidence type="ECO:0000269" key="2">
    <source>
    </source>
</evidence>
<evidence type="ECO:0000269" key="3">
    <source>
    </source>
</evidence>
<evidence type="ECO:0000269" key="4">
    <source>
    </source>
</evidence>
<feature type="chain" id="PRO_0000123534" description="Eukaryotic translation initiation factor 3 subunit B">
    <location>
        <begin position="1"/>
        <end position="725"/>
    </location>
</feature>
<feature type="domain" description="RRM" evidence="1">
    <location>
        <begin position="39"/>
        <end position="129"/>
    </location>
</feature>
<feature type="repeat" description="WD 1">
    <location>
        <begin position="190"/>
        <end position="229"/>
    </location>
</feature>
<feature type="repeat" description="WD 2">
    <location>
        <begin position="304"/>
        <end position="344"/>
    </location>
</feature>
<feature type="repeat" description="WD 3">
    <location>
        <begin position="347"/>
        <end position="386"/>
    </location>
</feature>
<feature type="coiled-coil region" evidence="1">
    <location>
        <begin position="630"/>
        <end position="671"/>
    </location>
</feature>
<feature type="modified residue" description="Phosphoserine" evidence="1 4">
    <location>
        <position position="23"/>
    </location>
</feature>
<feature type="modified residue" description="Phosphoserine" evidence="1 4">
    <location>
        <position position="135"/>
    </location>
</feature>
<feature type="modified residue" description="Phosphothreonine" evidence="4">
    <location>
        <position position="136"/>
    </location>
</feature>
<dbReference type="EMBL" id="CU329670">
    <property type="protein sequence ID" value="CAA94637.1"/>
    <property type="molecule type" value="Genomic_DNA"/>
</dbReference>
<dbReference type="PIR" id="T38379">
    <property type="entry name" value="T38379"/>
</dbReference>
<dbReference type="SMR" id="Q10425"/>
<dbReference type="BioGRID" id="278567">
    <property type="interactions" value="25"/>
</dbReference>
<dbReference type="FunCoup" id="Q10425">
    <property type="interactions" value="1032"/>
</dbReference>
<dbReference type="IntAct" id="Q10425">
    <property type="interactions" value="1"/>
</dbReference>
<dbReference type="STRING" id="284812.Q10425"/>
<dbReference type="iPTMnet" id="Q10425"/>
<dbReference type="PaxDb" id="4896-SPAC25G10.08.1"/>
<dbReference type="EnsemblFungi" id="SPAC25G10.08.1">
    <property type="protein sequence ID" value="SPAC25G10.08.1:pep"/>
    <property type="gene ID" value="SPAC25G10.08"/>
</dbReference>
<dbReference type="KEGG" id="spo:2542090"/>
<dbReference type="PomBase" id="SPAC25G10.08"/>
<dbReference type="VEuPathDB" id="FungiDB:SPAC25G10.08"/>
<dbReference type="eggNOG" id="KOG2314">
    <property type="taxonomic scope" value="Eukaryota"/>
</dbReference>
<dbReference type="HOGENOM" id="CLU_011152_4_0_1"/>
<dbReference type="InParanoid" id="Q10425"/>
<dbReference type="OMA" id="LWGGPQF"/>
<dbReference type="PhylomeDB" id="Q10425"/>
<dbReference type="Reactome" id="R-SPO-156827">
    <property type="pathway name" value="L13a-mediated translational silencing of Ceruloplasmin expression"/>
</dbReference>
<dbReference type="Reactome" id="R-SPO-72649">
    <property type="pathway name" value="Translation initiation complex formation"/>
</dbReference>
<dbReference type="Reactome" id="R-SPO-72689">
    <property type="pathway name" value="Formation of a pool of free 40S subunits"/>
</dbReference>
<dbReference type="Reactome" id="R-SPO-72695">
    <property type="pathway name" value="Formation of the ternary complex, and subsequently, the 43S complex"/>
</dbReference>
<dbReference type="Reactome" id="R-SPO-72702">
    <property type="pathway name" value="Ribosomal scanning and start codon recognition"/>
</dbReference>
<dbReference type="Reactome" id="R-SPO-72706">
    <property type="pathway name" value="GTP hydrolysis and joining of the 60S ribosomal subunit"/>
</dbReference>
<dbReference type="CD-CODE" id="F5301D48">
    <property type="entry name" value="Stress granule"/>
</dbReference>
<dbReference type="PRO" id="PR:Q10425"/>
<dbReference type="Proteomes" id="UP000002485">
    <property type="component" value="Chromosome I"/>
</dbReference>
<dbReference type="GO" id="GO:0005737">
    <property type="term" value="C:cytoplasm"/>
    <property type="evidence" value="ECO:0000314"/>
    <property type="project" value="UniProtKB"/>
</dbReference>
<dbReference type="GO" id="GO:0010494">
    <property type="term" value="C:cytoplasmic stress granule"/>
    <property type="evidence" value="ECO:0000314"/>
    <property type="project" value="PomBase"/>
</dbReference>
<dbReference type="GO" id="GO:0005829">
    <property type="term" value="C:cytosol"/>
    <property type="evidence" value="ECO:0007005"/>
    <property type="project" value="PomBase"/>
</dbReference>
<dbReference type="GO" id="GO:0016282">
    <property type="term" value="C:eukaryotic 43S preinitiation complex"/>
    <property type="evidence" value="ECO:0000314"/>
    <property type="project" value="PomBase"/>
</dbReference>
<dbReference type="GO" id="GO:0033290">
    <property type="term" value="C:eukaryotic 48S preinitiation complex"/>
    <property type="evidence" value="ECO:0007669"/>
    <property type="project" value="UniProtKB-UniRule"/>
</dbReference>
<dbReference type="GO" id="GO:0005852">
    <property type="term" value="C:eukaryotic translation initiation factor 3 complex"/>
    <property type="evidence" value="ECO:0000314"/>
    <property type="project" value="PomBase"/>
</dbReference>
<dbReference type="GO" id="GO:0071540">
    <property type="term" value="C:eukaryotic translation initiation factor 3 complex, eIF3e"/>
    <property type="evidence" value="ECO:0000314"/>
    <property type="project" value="PomBase"/>
</dbReference>
<dbReference type="GO" id="GO:0071541">
    <property type="term" value="C:eukaryotic translation initiation factor 3 complex, eIF3m"/>
    <property type="evidence" value="ECO:0000314"/>
    <property type="project" value="PomBase"/>
</dbReference>
<dbReference type="GO" id="GO:0003723">
    <property type="term" value="F:RNA binding"/>
    <property type="evidence" value="ECO:0000255"/>
    <property type="project" value="PomBase"/>
</dbReference>
<dbReference type="GO" id="GO:0003743">
    <property type="term" value="F:translation initiation factor activity"/>
    <property type="evidence" value="ECO:0007669"/>
    <property type="project" value="UniProtKB-UniRule"/>
</dbReference>
<dbReference type="GO" id="GO:0031369">
    <property type="term" value="F:translation initiation factor binding"/>
    <property type="evidence" value="ECO:0007669"/>
    <property type="project" value="InterPro"/>
</dbReference>
<dbReference type="GO" id="GO:0001732">
    <property type="term" value="P:formation of cytoplasmic translation initiation complex"/>
    <property type="evidence" value="ECO:0007669"/>
    <property type="project" value="UniProtKB-UniRule"/>
</dbReference>
<dbReference type="GO" id="GO:0006413">
    <property type="term" value="P:translational initiation"/>
    <property type="evidence" value="ECO:0000318"/>
    <property type="project" value="GO_Central"/>
</dbReference>
<dbReference type="CDD" id="cd12278">
    <property type="entry name" value="RRM_eIF3B"/>
    <property type="match status" value="1"/>
</dbReference>
<dbReference type="FunFam" id="2.130.10.10:FF:000419">
    <property type="entry name" value="Eukaryotic translation initiation factor 3 subunit B"/>
    <property type="match status" value="1"/>
</dbReference>
<dbReference type="Gene3D" id="3.30.70.330">
    <property type="match status" value="1"/>
</dbReference>
<dbReference type="Gene3D" id="2.130.10.10">
    <property type="entry name" value="YVTN repeat-like/Quinoprotein amine dehydrogenase"/>
    <property type="match status" value="1"/>
</dbReference>
<dbReference type="HAMAP" id="MF_03001">
    <property type="entry name" value="eIF3b"/>
    <property type="match status" value="1"/>
</dbReference>
<dbReference type="InterPro" id="IPR011400">
    <property type="entry name" value="EIF3B"/>
</dbReference>
<dbReference type="InterPro" id="IPR034363">
    <property type="entry name" value="eIF3B_RRM"/>
</dbReference>
<dbReference type="InterPro" id="IPR012677">
    <property type="entry name" value="Nucleotide-bd_a/b_plait_sf"/>
</dbReference>
<dbReference type="InterPro" id="IPR000504">
    <property type="entry name" value="RRM_dom"/>
</dbReference>
<dbReference type="InterPro" id="IPR003954">
    <property type="entry name" value="RRM_dom_euk"/>
</dbReference>
<dbReference type="InterPro" id="IPR013979">
    <property type="entry name" value="TIF_beta_prop-like"/>
</dbReference>
<dbReference type="InterPro" id="IPR015943">
    <property type="entry name" value="WD40/YVTN_repeat-like_dom_sf"/>
</dbReference>
<dbReference type="PANTHER" id="PTHR14068">
    <property type="entry name" value="EUKARYOTIC TRANSLATION INITIATION FACTOR 3 EIF3 -RELATED"/>
    <property type="match status" value="1"/>
</dbReference>
<dbReference type="PANTHER" id="PTHR14068:SF0">
    <property type="entry name" value="EUKARYOTIC TRANSLATION INITIATION FACTOR 3 SUBUNIT B"/>
    <property type="match status" value="1"/>
</dbReference>
<dbReference type="Pfam" id="PF08662">
    <property type="entry name" value="eIF2A"/>
    <property type="match status" value="1"/>
</dbReference>
<dbReference type="PIRSF" id="PIRSF036424">
    <property type="entry name" value="eIF3b"/>
    <property type="match status" value="1"/>
</dbReference>
<dbReference type="SMART" id="SM00361">
    <property type="entry name" value="RRM_1"/>
    <property type="match status" value="1"/>
</dbReference>
<dbReference type="SUPFAM" id="SSF82171">
    <property type="entry name" value="DPP6 N-terminal domain-like"/>
    <property type="match status" value="1"/>
</dbReference>
<dbReference type="PROSITE" id="PS50102">
    <property type="entry name" value="RRM"/>
    <property type="match status" value="1"/>
</dbReference>
<sequence>MSEILIEEIKDQIVVKDEEIDVSELEVKLNVTKPVGYDTVVVIEGAPVVEEAKQQDFFRFLSSKVLAKIGKVKENGFYMPFEEKNGKKMSLGLVFADFENVDGADLCVQELDGKQILKNHTFVVRKLNQLEKAFSTPDEFSFEEREFKEREHLRSWLTDYYGRDQFISYYGNRVSVNWNRKSDVPEQIVDRENWTETYVQWSPMGTYLVSLHLRGIQLWGGESWGMCARFLHPYVKFVDFSPNEKYLVSWSYEPVRLPPIGHPARETMPFTDDDEGKHCFVWDIASGRILRSFKIPPQPEGSKDGKKVIWPIFKWSADDKYLARVTVGQSISVYETPSLALVDKKTIKIDGVQNFEWCPVSDALGRDSKEQLLAYWTPEITNQPARVALISIPSKSTIRTKNLFNVSDCKLYWQSNGDYLCVKVDRHTKTKKSTFSNLEIFRIREKNIPVEVVDLKDVVLNFAWEPKSDRFAIISANDQVLNSTNVKTNLSFYGFEQKKNTPSTFRHIITFDKKTCNSLFMAPKGRFMVAATLGSSTQYDLEFYDLDFDTEKKEPDALANVQQIGSAEHFGMTELEWDPSGRYVTTSSTIWRHKLENGYRLCDFRGTLLREEMIGEFKQFIWRPRPPSPLTKEDMKKIRKKLKDYNRLFDEEDIAEQSSANRELAARRRQLISEWQKYRDEVIARVAEERAITGQPAITVPAEEEEIIQETVEEVISEEIEPVED</sequence>
<name>EIF3B_SCHPO</name>
<organism>
    <name type="scientific">Schizosaccharomyces pombe (strain 972 / ATCC 24843)</name>
    <name type="common">Fission yeast</name>
    <dbReference type="NCBI Taxonomy" id="284812"/>
    <lineage>
        <taxon>Eukaryota</taxon>
        <taxon>Fungi</taxon>
        <taxon>Dikarya</taxon>
        <taxon>Ascomycota</taxon>
        <taxon>Taphrinomycotina</taxon>
        <taxon>Schizosaccharomycetes</taxon>
        <taxon>Schizosaccharomycetales</taxon>
        <taxon>Schizosaccharomycetaceae</taxon>
        <taxon>Schizosaccharomyces</taxon>
    </lineage>
</organism>
<accession>Q10425</accession>
<keyword id="KW-0175">Coiled coil</keyword>
<keyword id="KW-0963">Cytoplasm</keyword>
<keyword id="KW-0396">Initiation factor</keyword>
<keyword id="KW-0597">Phosphoprotein</keyword>
<keyword id="KW-0648">Protein biosynthesis</keyword>
<keyword id="KW-1185">Reference proteome</keyword>
<keyword id="KW-0677">Repeat</keyword>
<keyword id="KW-0694">RNA-binding</keyword>
<keyword id="KW-0853">WD repeat</keyword>
<protein>
    <recommendedName>
        <fullName evidence="1">Eukaryotic translation initiation factor 3 subunit B</fullName>
        <shortName evidence="1">eIF3b</shortName>
    </recommendedName>
    <alternativeName>
        <fullName evidence="1">Eukaryotic translation initiation factor 3 90 kDa subunit homolog</fullName>
        <shortName evidence="1">eIF3 p90</shortName>
    </alternativeName>
    <alternativeName>
        <fullName>Translation initiation factor eIF3 p90 subunit homolog</fullName>
    </alternativeName>
    <alternativeName>
        <fullName>spPrt1</fullName>
    </alternativeName>
</protein>
<reference key="1">
    <citation type="journal article" date="2002" name="Nature">
        <title>The genome sequence of Schizosaccharomyces pombe.</title>
        <authorList>
            <person name="Wood V."/>
            <person name="Gwilliam R."/>
            <person name="Rajandream M.A."/>
            <person name="Lyne M.H."/>
            <person name="Lyne R."/>
            <person name="Stewart A."/>
            <person name="Sgouros J.G."/>
            <person name="Peat N."/>
            <person name="Hayles J."/>
            <person name="Baker S.G."/>
            <person name="Basham D."/>
            <person name="Bowman S."/>
            <person name="Brooks K."/>
            <person name="Brown D."/>
            <person name="Brown S."/>
            <person name="Chillingworth T."/>
            <person name="Churcher C.M."/>
            <person name="Collins M."/>
            <person name="Connor R."/>
            <person name="Cronin A."/>
            <person name="Davis P."/>
            <person name="Feltwell T."/>
            <person name="Fraser A."/>
            <person name="Gentles S."/>
            <person name="Goble A."/>
            <person name="Hamlin N."/>
            <person name="Harris D.E."/>
            <person name="Hidalgo J."/>
            <person name="Hodgson G."/>
            <person name="Holroyd S."/>
            <person name="Hornsby T."/>
            <person name="Howarth S."/>
            <person name="Huckle E.J."/>
            <person name="Hunt S."/>
            <person name="Jagels K."/>
            <person name="James K.D."/>
            <person name="Jones L."/>
            <person name="Jones M."/>
            <person name="Leather S."/>
            <person name="McDonald S."/>
            <person name="McLean J."/>
            <person name="Mooney P."/>
            <person name="Moule S."/>
            <person name="Mungall K.L."/>
            <person name="Murphy L.D."/>
            <person name="Niblett D."/>
            <person name="Odell C."/>
            <person name="Oliver K."/>
            <person name="O'Neil S."/>
            <person name="Pearson D."/>
            <person name="Quail M.A."/>
            <person name="Rabbinowitsch E."/>
            <person name="Rutherford K.M."/>
            <person name="Rutter S."/>
            <person name="Saunders D."/>
            <person name="Seeger K."/>
            <person name="Sharp S."/>
            <person name="Skelton J."/>
            <person name="Simmonds M.N."/>
            <person name="Squares R."/>
            <person name="Squares S."/>
            <person name="Stevens K."/>
            <person name="Taylor K."/>
            <person name="Taylor R.G."/>
            <person name="Tivey A."/>
            <person name="Walsh S.V."/>
            <person name="Warren T."/>
            <person name="Whitehead S."/>
            <person name="Woodward J.R."/>
            <person name="Volckaert G."/>
            <person name="Aert R."/>
            <person name="Robben J."/>
            <person name="Grymonprez B."/>
            <person name="Weltjens I."/>
            <person name="Vanstreels E."/>
            <person name="Rieger M."/>
            <person name="Schaefer M."/>
            <person name="Mueller-Auer S."/>
            <person name="Gabel C."/>
            <person name="Fuchs M."/>
            <person name="Duesterhoeft A."/>
            <person name="Fritzc C."/>
            <person name="Holzer E."/>
            <person name="Moestl D."/>
            <person name="Hilbert H."/>
            <person name="Borzym K."/>
            <person name="Langer I."/>
            <person name="Beck A."/>
            <person name="Lehrach H."/>
            <person name="Reinhardt R."/>
            <person name="Pohl T.M."/>
            <person name="Eger P."/>
            <person name="Zimmermann W."/>
            <person name="Wedler H."/>
            <person name="Wambutt R."/>
            <person name="Purnelle B."/>
            <person name="Goffeau A."/>
            <person name="Cadieu E."/>
            <person name="Dreano S."/>
            <person name="Gloux S."/>
            <person name="Lelaure V."/>
            <person name="Mottier S."/>
            <person name="Galibert F."/>
            <person name="Aves S.J."/>
            <person name="Xiang Z."/>
            <person name="Hunt C."/>
            <person name="Moore K."/>
            <person name="Hurst S.M."/>
            <person name="Lucas M."/>
            <person name="Rochet M."/>
            <person name="Gaillardin C."/>
            <person name="Tallada V.A."/>
            <person name="Garzon A."/>
            <person name="Thode G."/>
            <person name="Daga R.R."/>
            <person name="Cruzado L."/>
            <person name="Jimenez J."/>
            <person name="Sanchez M."/>
            <person name="del Rey F."/>
            <person name="Benito J."/>
            <person name="Dominguez A."/>
            <person name="Revuelta J.L."/>
            <person name="Moreno S."/>
            <person name="Armstrong J."/>
            <person name="Forsburg S.L."/>
            <person name="Cerutti L."/>
            <person name="Lowe T."/>
            <person name="McCombie W.R."/>
            <person name="Paulsen I."/>
            <person name="Potashkin J."/>
            <person name="Shpakovski G.V."/>
            <person name="Ussery D."/>
            <person name="Barrell B.G."/>
            <person name="Nurse P."/>
        </authorList>
    </citation>
    <scope>NUCLEOTIDE SEQUENCE [LARGE SCALE GENOMIC DNA]</scope>
    <source>
        <strain>972 / ATCC 24843</strain>
    </source>
</reference>
<reference key="2">
    <citation type="journal article" date="2001" name="J. Biol. Chem.">
        <title>Fission yeast homolog of murine Int-6 protein, encoded by mouse mammary tumor virus integration site, is associated with the conserved core subunits of eukaryotic translation initiation factor 3.</title>
        <authorList>
            <person name="Akiyoshi Y."/>
            <person name="Clayton J."/>
            <person name="Phan L."/>
            <person name="Yamamoto M."/>
            <person name="Hinnebusch A.G."/>
            <person name="Watanabe Y."/>
            <person name="Asano K."/>
        </authorList>
    </citation>
    <scope>IDENTIFICATION IN THE EIF-3 COMPLEX</scope>
    <scope>IDENTIFICATION BY MASS SPECTROMETRY</scope>
</reference>
<reference key="3">
    <citation type="journal article" date="2002" name="J. Biol. Chem.">
        <title>Moe1 and spInt6, the fission yeast homologues of mammalian translation initiation factor 3 subunits p66 (eIF3d) and p48 (eIF3e), respectively, are required for stable association of eIF3 subunits.</title>
        <authorList>
            <person name="Bandyopadhyay A."/>
            <person name="Lakshmanan V."/>
            <person name="Matsumoto T."/>
            <person name="Chang E.C."/>
            <person name="Maitra U."/>
        </authorList>
    </citation>
    <scope>INTERACTION WITH SUM1</scope>
    <scope>ASSOCIATION WITH THE 40S RIBOSOME</scope>
</reference>
<reference key="4">
    <citation type="journal article" date="2005" name="BMC Biol.">
        <title>PCI proteins eIF3e and eIF3m define distinct translation initiation factor 3 complexes.</title>
        <authorList>
            <person name="Zhou C."/>
            <person name="Arslan F."/>
            <person name="Wee S."/>
            <person name="Krishnan S."/>
            <person name="Ivanov A.R."/>
            <person name="Oliva A."/>
            <person name="Leatherwood J."/>
            <person name="Wolf D.A."/>
        </authorList>
    </citation>
    <scope>IDENTIFICATION IN THE EIF-3 COMPLEX</scope>
    <scope>IDENTIFICATION BY MASS SPECTROMETRY</scope>
    <scope>SUBCELLULAR LOCATION</scope>
</reference>
<reference key="5">
    <citation type="journal article" date="2008" name="J. Proteome Res.">
        <title>Phosphoproteome analysis of fission yeast.</title>
        <authorList>
            <person name="Wilson-Grady J.T."/>
            <person name="Villen J."/>
            <person name="Gygi S.P."/>
        </authorList>
    </citation>
    <scope>PHOSPHORYLATION [LARGE SCALE ANALYSIS] AT SER-23; SER-135 AND THR-136</scope>
    <scope>IDENTIFICATION BY MASS SPECTROMETRY</scope>
</reference>
<gene>
    <name type="ORF">SPAC25G10.08</name>
</gene>
<comment type="function">
    <text evidence="1">RNA-binding component of the eukaryotic translation initiation factor 3 (eIF-3) complex, which is involved in protein synthesis of a specialized repertoire of mRNAs and, together with other initiation factors, stimulates binding of mRNA and methionyl-tRNAi to the 40S ribosome. The eIF-3 complex specifically targets and initiates translation of a subset of mRNAs involved in cell proliferation.</text>
</comment>
<comment type="subunit">
    <text evidence="1 2 3">Component of the eukaryotic translation initiation factor 3 (eIF-3) complex. The eIF-3 complex appears to include tif32/eif3a, SPAC25G10.08/eif3b, tif33/eif3c, SPBC4C3.07/eif3f, tif35/eif3g and sum1/eif3i. This set of common subunits may also associate exclusively with either moe1/eif3d and int6/eif3e, or with SPAC821.05/eif3h and SPAC1751.03/eif3m. The eIF-3 complex may also include SPAC3A12.13c/eif3j.</text>
</comment>
<comment type="subcellular location">
    <subcellularLocation>
        <location evidence="1 3">Cytoplasm</location>
    </subcellularLocation>
</comment>
<comment type="similarity">
    <text evidence="1">Belongs to the eIF-3 subunit B family.</text>
</comment>